<name>SEBP2_MOUSE</name>
<proteinExistence type="evidence at transcript level"/>
<feature type="chain" id="PRO_0000460114" description="Selenocysteine insertion sequence-binding protein 2">
    <location>
        <begin position="1"/>
        <end position="858"/>
    </location>
</feature>
<feature type="region of interest" description="Disordered" evidence="4">
    <location>
        <begin position="127"/>
        <end position="261"/>
    </location>
</feature>
<feature type="region of interest" description="Disordered" evidence="4">
    <location>
        <begin position="275"/>
        <end position="296"/>
    </location>
</feature>
<feature type="region of interest" description="Disordered" evidence="4">
    <location>
        <begin position="327"/>
        <end position="625"/>
    </location>
</feature>
<feature type="region of interest" description="RNA-binding" evidence="3">
    <location>
        <begin position="678"/>
        <end position="699"/>
    </location>
</feature>
<feature type="region of interest" description="Disordered" evidence="4">
    <location>
        <begin position="785"/>
        <end position="819"/>
    </location>
</feature>
<feature type="short sequence motif" description="Nuclear localization signal" evidence="3">
    <location>
        <begin position="380"/>
        <end position="387"/>
    </location>
</feature>
<feature type="compositionally biased region" description="Basic and acidic residues" evidence="4">
    <location>
        <begin position="147"/>
        <end position="166"/>
    </location>
</feature>
<feature type="compositionally biased region" description="Basic and acidic residues" evidence="4">
    <location>
        <begin position="188"/>
        <end position="197"/>
    </location>
</feature>
<feature type="compositionally biased region" description="Basic and acidic residues" evidence="4">
    <location>
        <begin position="215"/>
        <end position="224"/>
    </location>
</feature>
<feature type="compositionally biased region" description="Polar residues" evidence="4">
    <location>
        <begin position="281"/>
        <end position="296"/>
    </location>
</feature>
<feature type="compositionally biased region" description="Polar residues" evidence="4">
    <location>
        <begin position="327"/>
        <end position="352"/>
    </location>
</feature>
<feature type="compositionally biased region" description="Basic residues" evidence="4">
    <location>
        <begin position="418"/>
        <end position="429"/>
    </location>
</feature>
<feature type="compositionally biased region" description="Polar residues" evidence="4">
    <location>
        <begin position="430"/>
        <end position="447"/>
    </location>
</feature>
<feature type="compositionally biased region" description="Basic and acidic residues" evidence="4">
    <location>
        <begin position="539"/>
        <end position="548"/>
    </location>
</feature>
<feature type="compositionally biased region" description="Polar residues" evidence="4">
    <location>
        <begin position="554"/>
        <end position="563"/>
    </location>
</feature>
<feature type="compositionally biased region" description="Polar residues" evidence="4">
    <location>
        <begin position="571"/>
        <end position="582"/>
    </location>
</feature>
<feature type="compositionally biased region" description="Pro residues" evidence="4">
    <location>
        <begin position="795"/>
        <end position="805"/>
    </location>
</feature>
<feature type="sequence conflict" description="In Ref. 1; BAE40494." evidence="9" ref="1">
    <original>W</original>
    <variation>G</variation>
    <location>
        <position position="244"/>
    </location>
</feature>
<feature type="sequence conflict" description="In Ref. 1; BAE40494." evidence="9" ref="1">
    <original>P</original>
    <variation>H</variation>
    <location>
        <position position="477"/>
    </location>
</feature>
<comment type="function">
    <text evidence="1 5 6 7">mRNA-binding protein that binds to the SECIS (selenocysteine insertion sequence) element present in the 3'-UTR of mRNAs encoding selenoproteins and facilitates the incorporation of the rare amino acid selenocysteine (PubMed:22992746, PubMed:24274065, PubMed:24844465). Insertion of selenocysteine at UGA codons is mediated by SECISBP2 and EEFSEC: SECISBP2 (1) specifically binds the SECIS sequence once the 80S ribosome encounters an in-frame UGA codon and (2) contacts the RPS27A/eS31 of the 40S ribosome before ribosome stalling (By similarity). (3) GTP-bound EEFSEC then delivers selenocysteinyl-tRNA(Sec) to the 80S ribosome and adopts a preaccommodated state conformation (By similarity). (4) After GTP hydrolysis, EEFSEC dissociates from the assembly, selenocysteinyl-tRNA(Sec) accommodates, and peptide bond synthesis and selenoprotein elongation occur (By similarity).</text>
</comment>
<comment type="subcellular location">
    <subcellularLocation>
        <location evidence="2">Cytoplasm</location>
    </subcellularLocation>
    <subcellularLocation>
        <location evidence="2">Nucleus</location>
    </subcellularLocation>
</comment>
<comment type="disruption phenotype">
    <text evidence="6 7">Embryonic lethality: embryos implant but die before gastrulation (PubMed:24274065). Conditional deletion in hepatocytes significantly reduces the abundance of many, but not all, selenoprotein mRNAs (PubMed:24274065). Conditional deletion in neurons leads striatal neuronal loss leading to coordination defects: defects are caused by reduced cerebral expression of selenoproteins (PubMed:24844465).</text>
</comment>
<protein>
    <recommendedName>
        <fullName evidence="8">Selenocysteine insertion sequence-binding protein 2</fullName>
        <shortName evidence="8">SECIS-binding protein 2</shortName>
    </recommendedName>
</protein>
<gene>
    <name evidence="10" type="primary">Secisbp2</name>
    <name evidence="8" type="synonym">Sbp2</name>
</gene>
<organism>
    <name type="scientific">Mus musculus</name>
    <name type="common">Mouse</name>
    <dbReference type="NCBI Taxonomy" id="10090"/>
    <lineage>
        <taxon>Eukaryota</taxon>
        <taxon>Metazoa</taxon>
        <taxon>Chordata</taxon>
        <taxon>Craniata</taxon>
        <taxon>Vertebrata</taxon>
        <taxon>Euteleostomi</taxon>
        <taxon>Mammalia</taxon>
        <taxon>Eutheria</taxon>
        <taxon>Euarchontoglires</taxon>
        <taxon>Glires</taxon>
        <taxon>Rodentia</taxon>
        <taxon>Myomorpha</taxon>
        <taxon>Muroidea</taxon>
        <taxon>Muridae</taxon>
        <taxon>Murinae</taxon>
        <taxon>Mus</taxon>
        <taxon>Mus</taxon>
    </lineage>
</organism>
<evidence type="ECO:0000250" key="1">
    <source>
        <dbReference type="UniProtKB" id="Q96T21"/>
    </source>
</evidence>
<evidence type="ECO:0000250" key="2">
    <source>
        <dbReference type="UniProtKB" id="Q9QX72"/>
    </source>
</evidence>
<evidence type="ECO:0000255" key="3"/>
<evidence type="ECO:0000256" key="4">
    <source>
        <dbReference type="SAM" id="MobiDB-lite"/>
    </source>
</evidence>
<evidence type="ECO:0000269" key="5">
    <source>
    </source>
</evidence>
<evidence type="ECO:0000269" key="6">
    <source>
    </source>
</evidence>
<evidence type="ECO:0000269" key="7">
    <source>
    </source>
</evidence>
<evidence type="ECO:0000303" key="8">
    <source>
    </source>
</evidence>
<evidence type="ECO:0000305" key="9"/>
<evidence type="ECO:0000312" key="10">
    <source>
        <dbReference type="MGI" id="MGI:1922670"/>
    </source>
</evidence>
<keyword id="KW-0963">Cytoplasm</keyword>
<keyword id="KW-0539">Nucleus</keyword>
<keyword id="KW-0648">Protein biosynthesis</keyword>
<keyword id="KW-1185">Reference proteome</keyword>
<keyword id="KW-0694">RNA-binding</keyword>
<dbReference type="EMBL" id="AK156076">
    <property type="protein sequence ID" value="BAE33574.1"/>
    <property type="molecule type" value="mRNA"/>
</dbReference>
<dbReference type="EMBL" id="AK168634">
    <property type="protein sequence ID" value="BAE40494.1"/>
    <property type="molecule type" value="mRNA"/>
</dbReference>
<dbReference type="EMBL" id="BC125391">
    <property type="protein sequence ID" value="AAI25392.1"/>
    <property type="molecule type" value="mRNA"/>
</dbReference>
<dbReference type="EMBL" id="BC125393">
    <property type="protein sequence ID" value="AAI25394.1"/>
    <property type="molecule type" value="mRNA"/>
</dbReference>
<dbReference type="CCDS" id="CCDS36665.1"/>
<dbReference type="RefSeq" id="NP_001295377.1">
    <property type="nucleotide sequence ID" value="NM_001308448.1"/>
</dbReference>
<dbReference type="RefSeq" id="NP_083555.1">
    <property type="nucleotide sequence ID" value="NM_029279.2"/>
</dbReference>
<dbReference type="SMR" id="Q3U1C4"/>
<dbReference type="FunCoup" id="Q3U1C4">
    <property type="interactions" value="2690"/>
</dbReference>
<dbReference type="STRING" id="10090.ENSMUSP00000045740"/>
<dbReference type="GlyGen" id="Q3U1C4">
    <property type="glycosylation" value="1 site, 1 N-linked glycan (1 site)"/>
</dbReference>
<dbReference type="PhosphoSitePlus" id="Q3U1C4"/>
<dbReference type="PaxDb" id="10090-ENSMUSP00000045740"/>
<dbReference type="ProteomicsDB" id="334480"/>
<dbReference type="Antibodypedia" id="27996">
    <property type="antibodies" value="202 antibodies from 31 providers"/>
</dbReference>
<dbReference type="Ensembl" id="ENSMUST00000040117.15">
    <property type="protein sequence ID" value="ENSMUSP00000045740.9"/>
    <property type="gene ID" value="ENSMUSG00000035139.15"/>
</dbReference>
<dbReference type="GeneID" id="75420"/>
<dbReference type="KEGG" id="mmu:75420"/>
<dbReference type="UCSC" id="uc007qmk.2">
    <property type="organism name" value="mouse"/>
</dbReference>
<dbReference type="AGR" id="MGI:1922670"/>
<dbReference type="CTD" id="79048"/>
<dbReference type="MGI" id="MGI:1922670">
    <property type="gene designation" value="Secisbp2"/>
</dbReference>
<dbReference type="VEuPathDB" id="HostDB:ENSMUSG00000035139"/>
<dbReference type="eggNOG" id="ENOG502QUP4">
    <property type="taxonomic scope" value="Eukaryota"/>
</dbReference>
<dbReference type="GeneTree" id="ENSGT00490000043356"/>
<dbReference type="HOGENOM" id="CLU_016771_0_0_1"/>
<dbReference type="OMA" id="CVFPSCA"/>
<dbReference type="OrthoDB" id="263617at2759"/>
<dbReference type="TreeFam" id="TF328821"/>
<dbReference type="ChiTaRS" id="Secisbp2">
    <property type="organism name" value="mouse"/>
</dbReference>
<dbReference type="Proteomes" id="UP000000589">
    <property type="component" value="Chromosome 13"/>
</dbReference>
<dbReference type="RNAct" id="Q3U1C4">
    <property type="molecule type" value="protein"/>
</dbReference>
<dbReference type="Bgee" id="ENSMUSG00000035139">
    <property type="expression patterns" value="Expressed in manus and 231 other cell types or tissues"/>
</dbReference>
<dbReference type="ExpressionAtlas" id="Q3U1C4">
    <property type="expression patterns" value="baseline and differential"/>
</dbReference>
<dbReference type="GO" id="GO:0005739">
    <property type="term" value="C:mitochondrion"/>
    <property type="evidence" value="ECO:0007005"/>
    <property type="project" value="MGI"/>
</dbReference>
<dbReference type="GO" id="GO:0005654">
    <property type="term" value="C:nucleoplasm"/>
    <property type="evidence" value="ECO:0007669"/>
    <property type="project" value="Ensembl"/>
</dbReference>
<dbReference type="GO" id="GO:1990904">
    <property type="term" value="C:ribonucleoprotein complex"/>
    <property type="evidence" value="ECO:0000314"/>
    <property type="project" value="MGI"/>
</dbReference>
<dbReference type="GO" id="GO:0003730">
    <property type="term" value="F:mRNA 3'-UTR binding"/>
    <property type="evidence" value="ECO:0007669"/>
    <property type="project" value="Ensembl"/>
</dbReference>
<dbReference type="GO" id="GO:0043021">
    <property type="term" value="F:ribonucleoprotein complex binding"/>
    <property type="evidence" value="ECO:0000314"/>
    <property type="project" value="MGI"/>
</dbReference>
<dbReference type="GO" id="GO:0035368">
    <property type="term" value="F:selenocysteine insertion sequence binding"/>
    <property type="evidence" value="ECO:0000314"/>
    <property type="project" value="MGI"/>
</dbReference>
<dbReference type="GO" id="GO:0021884">
    <property type="term" value="P:forebrain neuron development"/>
    <property type="evidence" value="ECO:0000315"/>
    <property type="project" value="MGI"/>
</dbReference>
<dbReference type="GO" id="GO:0048255">
    <property type="term" value="P:mRNA stabilization"/>
    <property type="evidence" value="ECO:0000315"/>
    <property type="project" value="MGI"/>
</dbReference>
<dbReference type="GO" id="GO:2000623">
    <property type="term" value="P:negative regulation of nuclear-transcribed mRNA catabolic process, nonsense-mediated decay"/>
    <property type="evidence" value="ECO:0000315"/>
    <property type="project" value="MGI"/>
</dbReference>
<dbReference type="GO" id="GO:0006401">
    <property type="term" value="P:RNA catabolic process"/>
    <property type="evidence" value="ECO:0000315"/>
    <property type="project" value="MGI"/>
</dbReference>
<dbReference type="GO" id="GO:0001514">
    <property type="term" value="P:selenocysteine incorporation"/>
    <property type="evidence" value="ECO:0000315"/>
    <property type="project" value="MGI"/>
</dbReference>
<dbReference type="GO" id="GO:0021756">
    <property type="term" value="P:striatum development"/>
    <property type="evidence" value="ECO:0000315"/>
    <property type="project" value="MGI"/>
</dbReference>
<dbReference type="GO" id="GO:0006412">
    <property type="term" value="P:translation"/>
    <property type="evidence" value="ECO:0000315"/>
    <property type="project" value="MGI"/>
</dbReference>
<dbReference type="FunFam" id="3.30.1330.30:FF:000004">
    <property type="entry name" value="selenocysteine insertion sequence-binding protein 2"/>
    <property type="match status" value="1"/>
</dbReference>
<dbReference type="Gene3D" id="3.30.1330.30">
    <property type="match status" value="1"/>
</dbReference>
<dbReference type="InterPro" id="IPR029064">
    <property type="entry name" value="Ribosomal_eL30-like_sf"/>
</dbReference>
<dbReference type="InterPro" id="IPR004038">
    <property type="entry name" value="Ribosomal_eL8/eL30/eS12/Gad45"/>
</dbReference>
<dbReference type="InterPro" id="IPR040051">
    <property type="entry name" value="SECISBP2"/>
</dbReference>
<dbReference type="PANTHER" id="PTHR13284">
    <property type="entry name" value="GH01354P"/>
    <property type="match status" value="1"/>
</dbReference>
<dbReference type="PANTHER" id="PTHR13284:SF9">
    <property type="entry name" value="SELENOCYSTEINE INSERTION SEQUENCE-BINDING PROTEIN 2"/>
    <property type="match status" value="1"/>
</dbReference>
<dbReference type="Pfam" id="PF01248">
    <property type="entry name" value="Ribosomal_L7Ae"/>
    <property type="match status" value="1"/>
</dbReference>
<dbReference type="SUPFAM" id="SSF55315">
    <property type="entry name" value="L30e-like"/>
    <property type="match status" value="1"/>
</dbReference>
<reference key="1">
    <citation type="journal article" date="2005" name="Science">
        <title>The transcriptional landscape of the mammalian genome.</title>
        <authorList>
            <person name="Carninci P."/>
            <person name="Kasukawa T."/>
            <person name="Katayama S."/>
            <person name="Gough J."/>
            <person name="Frith M.C."/>
            <person name="Maeda N."/>
            <person name="Oyama R."/>
            <person name="Ravasi T."/>
            <person name="Lenhard B."/>
            <person name="Wells C."/>
            <person name="Kodzius R."/>
            <person name="Shimokawa K."/>
            <person name="Bajic V.B."/>
            <person name="Brenner S.E."/>
            <person name="Batalov S."/>
            <person name="Forrest A.R."/>
            <person name="Zavolan M."/>
            <person name="Davis M.J."/>
            <person name="Wilming L.G."/>
            <person name="Aidinis V."/>
            <person name="Allen J.E."/>
            <person name="Ambesi-Impiombato A."/>
            <person name="Apweiler R."/>
            <person name="Aturaliya R.N."/>
            <person name="Bailey T.L."/>
            <person name="Bansal M."/>
            <person name="Baxter L."/>
            <person name="Beisel K.W."/>
            <person name="Bersano T."/>
            <person name="Bono H."/>
            <person name="Chalk A.M."/>
            <person name="Chiu K.P."/>
            <person name="Choudhary V."/>
            <person name="Christoffels A."/>
            <person name="Clutterbuck D.R."/>
            <person name="Crowe M.L."/>
            <person name="Dalla E."/>
            <person name="Dalrymple B.P."/>
            <person name="de Bono B."/>
            <person name="Della Gatta G."/>
            <person name="di Bernardo D."/>
            <person name="Down T."/>
            <person name="Engstrom P."/>
            <person name="Fagiolini M."/>
            <person name="Faulkner G."/>
            <person name="Fletcher C.F."/>
            <person name="Fukushima T."/>
            <person name="Furuno M."/>
            <person name="Futaki S."/>
            <person name="Gariboldi M."/>
            <person name="Georgii-Hemming P."/>
            <person name="Gingeras T.R."/>
            <person name="Gojobori T."/>
            <person name="Green R.E."/>
            <person name="Gustincich S."/>
            <person name="Harbers M."/>
            <person name="Hayashi Y."/>
            <person name="Hensch T.K."/>
            <person name="Hirokawa N."/>
            <person name="Hill D."/>
            <person name="Huminiecki L."/>
            <person name="Iacono M."/>
            <person name="Ikeo K."/>
            <person name="Iwama A."/>
            <person name="Ishikawa T."/>
            <person name="Jakt M."/>
            <person name="Kanapin A."/>
            <person name="Katoh M."/>
            <person name="Kawasawa Y."/>
            <person name="Kelso J."/>
            <person name="Kitamura H."/>
            <person name="Kitano H."/>
            <person name="Kollias G."/>
            <person name="Krishnan S.P."/>
            <person name="Kruger A."/>
            <person name="Kummerfeld S.K."/>
            <person name="Kurochkin I.V."/>
            <person name="Lareau L.F."/>
            <person name="Lazarevic D."/>
            <person name="Lipovich L."/>
            <person name="Liu J."/>
            <person name="Liuni S."/>
            <person name="McWilliam S."/>
            <person name="Madan Babu M."/>
            <person name="Madera M."/>
            <person name="Marchionni L."/>
            <person name="Matsuda H."/>
            <person name="Matsuzawa S."/>
            <person name="Miki H."/>
            <person name="Mignone F."/>
            <person name="Miyake S."/>
            <person name="Morris K."/>
            <person name="Mottagui-Tabar S."/>
            <person name="Mulder N."/>
            <person name="Nakano N."/>
            <person name="Nakauchi H."/>
            <person name="Ng P."/>
            <person name="Nilsson R."/>
            <person name="Nishiguchi S."/>
            <person name="Nishikawa S."/>
            <person name="Nori F."/>
            <person name="Ohara O."/>
            <person name="Okazaki Y."/>
            <person name="Orlando V."/>
            <person name="Pang K.C."/>
            <person name="Pavan W.J."/>
            <person name="Pavesi G."/>
            <person name="Pesole G."/>
            <person name="Petrovsky N."/>
            <person name="Piazza S."/>
            <person name="Reed J."/>
            <person name="Reid J.F."/>
            <person name="Ring B.Z."/>
            <person name="Ringwald M."/>
            <person name="Rost B."/>
            <person name="Ruan Y."/>
            <person name="Salzberg S.L."/>
            <person name="Sandelin A."/>
            <person name="Schneider C."/>
            <person name="Schoenbach C."/>
            <person name="Sekiguchi K."/>
            <person name="Semple C.A."/>
            <person name="Seno S."/>
            <person name="Sessa L."/>
            <person name="Sheng Y."/>
            <person name="Shibata Y."/>
            <person name="Shimada H."/>
            <person name="Shimada K."/>
            <person name="Silva D."/>
            <person name="Sinclair B."/>
            <person name="Sperling S."/>
            <person name="Stupka E."/>
            <person name="Sugiura K."/>
            <person name="Sultana R."/>
            <person name="Takenaka Y."/>
            <person name="Taki K."/>
            <person name="Tammoja K."/>
            <person name="Tan S.L."/>
            <person name="Tang S."/>
            <person name="Taylor M.S."/>
            <person name="Tegner J."/>
            <person name="Teichmann S.A."/>
            <person name="Ueda H.R."/>
            <person name="van Nimwegen E."/>
            <person name="Verardo R."/>
            <person name="Wei C.L."/>
            <person name="Yagi K."/>
            <person name="Yamanishi H."/>
            <person name="Zabarovsky E."/>
            <person name="Zhu S."/>
            <person name="Zimmer A."/>
            <person name="Hide W."/>
            <person name="Bult C."/>
            <person name="Grimmond S.M."/>
            <person name="Teasdale R.D."/>
            <person name="Liu E.T."/>
            <person name="Brusic V."/>
            <person name="Quackenbush J."/>
            <person name="Wahlestedt C."/>
            <person name="Mattick J.S."/>
            <person name="Hume D.A."/>
            <person name="Kai C."/>
            <person name="Sasaki D."/>
            <person name="Tomaru Y."/>
            <person name="Fukuda S."/>
            <person name="Kanamori-Katayama M."/>
            <person name="Suzuki M."/>
            <person name="Aoki J."/>
            <person name="Arakawa T."/>
            <person name="Iida J."/>
            <person name="Imamura K."/>
            <person name="Itoh M."/>
            <person name="Kato T."/>
            <person name="Kawaji H."/>
            <person name="Kawagashira N."/>
            <person name="Kawashima T."/>
            <person name="Kojima M."/>
            <person name="Kondo S."/>
            <person name="Konno H."/>
            <person name="Nakano K."/>
            <person name="Ninomiya N."/>
            <person name="Nishio T."/>
            <person name="Okada M."/>
            <person name="Plessy C."/>
            <person name="Shibata K."/>
            <person name="Shiraki T."/>
            <person name="Suzuki S."/>
            <person name="Tagami M."/>
            <person name="Waki K."/>
            <person name="Watahiki A."/>
            <person name="Okamura-Oho Y."/>
            <person name="Suzuki H."/>
            <person name="Kawai J."/>
            <person name="Hayashizaki Y."/>
        </authorList>
    </citation>
    <scope>NUCLEOTIDE SEQUENCE [LARGE SCALE MRNA]</scope>
    <source>
        <strain>C57BL/6J</strain>
        <strain>NOD</strain>
        <tissue>Liver</tissue>
        <tissue>Spleen</tissue>
    </source>
</reference>
<reference key="2">
    <citation type="journal article" date="2009" name="PLoS Biol.">
        <title>Lineage-specific biology revealed by a finished genome assembly of the mouse.</title>
        <authorList>
            <person name="Church D.M."/>
            <person name="Goodstadt L."/>
            <person name="Hillier L.W."/>
            <person name="Zody M.C."/>
            <person name="Goldstein S."/>
            <person name="She X."/>
            <person name="Bult C.J."/>
            <person name="Agarwala R."/>
            <person name="Cherry J.L."/>
            <person name="DiCuccio M."/>
            <person name="Hlavina W."/>
            <person name="Kapustin Y."/>
            <person name="Meric P."/>
            <person name="Maglott D."/>
            <person name="Birtle Z."/>
            <person name="Marques A.C."/>
            <person name="Graves T."/>
            <person name="Zhou S."/>
            <person name="Teague B."/>
            <person name="Potamousis K."/>
            <person name="Churas C."/>
            <person name="Place M."/>
            <person name="Herschleb J."/>
            <person name="Runnheim R."/>
            <person name="Forrest D."/>
            <person name="Amos-Landgraf J."/>
            <person name="Schwartz D.C."/>
            <person name="Cheng Z."/>
            <person name="Lindblad-Toh K."/>
            <person name="Eichler E.E."/>
            <person name="Ponting C.P."/>
        </authorList>
    </citation>
    <scope>NUCLEOTIDE SEQUENCE [LARGE SCALE GENOMIC DNA]</scope>
    <source>
        <strain>C57BL/6J</strain>
    </source>
</reference>
<reference key="3">
    <citation type="journal article" date="2004" name="Genome Res.">
        <title>The status, quality, and expansion of the NIH full-length cDNA project: the Mammalian Gene Collection (MGC).</title>
        <authorList>
            <consortium name="The MGC Project Team"/>
        </authorList>
    </citation>
    <scope>NUCLEOTIDE SEQUENCE [LARGE SCALE MRNA]</scope>
    <source>
        <tissue>Brain</tissue>
    </source>
</reference>
<reference key="4">
    <citation type="journal article" date="2012" name="J. Biol. Chem.">
        <title>The selenocysteine-specific elongation factor contains a novel and multi-functional domain.</title>
        <authorList>
            <person name="Gonzalez-Flores J.N."/>
            <person name="Gupta N."/>
            <person name="DeMong L.W."/>
            <person name="Copeland P.R."/>
        </authorList>
    </citation>
    <scope>FUNCTION</scope>
</reference>
<reference key="5">
    <citation type="journal article" date="2014" name="Antioxid. Redox Signal.">
        <title>Secisbp2 is essential for embryonic development and enhances selenoprotein expression.</title>
        <authorList>
            <person name="Seeher S."/>
            <person name="Atassi T."/>
            <person name="Mahdi Y."/>
            <person name="Carlson B.A."/>
            <person name="Braun D."/>
            <person name="Wirth E.K."/>
            <person name="Klein M.O."/>
            <person name="Reix N."/>
            <person name="Miniard A.C."/>
            <person name="Schomburg L."/>
            <person name="Hatfield D.L."/>
            <person name="Driscoll D.M."/>
            <person name="Schweizer U."/>
        </authorList>
    </citation>
    <scope>FUNCTION</scope>
    <scope>DISRUPTION PHENOTYPE</scope>
</reference>
<reference key="6">
    <citation type="journal article" date="2014" name="Biochem. J.">
        <title>Impaired selenoprotein expression in brain triggers striatal neuronal loss leading to co-ordination defects in mice.</title>
        <authorList>
            <person name="Seeher S."/>
            <person name="Carlson B.A."/>
            <person name="Miniard A.C."/>
            <person name="Wirth E.K."/>
            <person name="Mahdi Y."/>
            <person name="Hatfield D.L."/>
            <person name="Driscoll D.M."/>
            <person name="Schweizer U."/>
        </authorList>
    </citation>
    <scope>FUNCTION</scope>
    <scope>DISRUPTION PHENOTYPE</scope>
</reference>
<sequence length="858" mass="94814">MASERPREPDGEDSIKLSADVKPFVPKFAGLNVAWSESSETRVFPGCAATYYPFVQEPPAAEQKMYPEDMAFGAPTFPAQYVSSEIALHPFAYPTYTLESAQSVCSVPTLQYDYSQARCHPGFRTAKPRHEHVCPPPQEAKGVFKKKPSDERRACEEQKSSSRRADNAVPCEARPARGSSHLSSRTESSLKSDGYHKRPDRKSRILAKSASTSKPEFEFSRLDFPELQSPKNSNMPETQKPPRWGPLGPAASNMPLLGDVGKPVADMVEGKMVKSDHTDGAVTSNATTSSPSCTQELSWTPMGYIVRQTVSSDSAAATENVTSMINLKKTTSSADAKNVSVTSEALSSNPSYNREKRVYPAPKAKASQGGELEQNESSKKNKKKKEKSKPSYEVLTVQEPPRIEDAEEFPNLSVASERRHRGQSPKLHSKQQTQNEFKTSGKKSQVPVQLDLGGMLAALEKQQQQQHASHAKPSSRPVVFSVGAVPVLSKDASSSERGRRSSQMKTPHNPLDSSAPLMKKGKQREIPKAKKPTSLKKIILKERQERMQQRLQESAVSLTVASDDSQDVESGASNQTPSQDNPTGPEKTEESVSSTPVVEGESEEPAGTEFQRDPEACQPAPDSATFPKIHSRRFRDYCSQMLSKEVDACVTGLLKELVRFQDRMYQKDPVKAKTKRRLVLGLREVLKHLKLRKLKCIIISPNCEKTQSKGGLDDTLHTIIDCACEQNIPFVFALNRKALGRSLNKAVPVSIVGIFSYDGAQDQFHKMVELTMAARQAYKTMLETMRQEQAGEPGPQSPPSPPMQDPIPSTEEGTLPSTGEEPHYIEIWKKHLEAYSQRALELEDSLEASTSQMMNLNL</sequence>
<accession>Q3U1C4</accession>
<accession>Q3TGQ4</accession>